<evidence type="ECO:0000255" key="1">
    <source>
        <dbReference type="HAMAP-Rule" id="MF_00291"/>
    </source>
</evidence>
<evidence type="ECO:0000256" key="2">
    <source>
        <dbReference type="SAM" id="MobiDB-lite"/>
    </source>
</evidence>
<evidence type="ECO:0000305" key="3"/>
<proteinExistence type="inferred from homology"/>
<protein>
    <recommendedName>
        <fullName evidence="1">Small ribosomal subunit protein uS2</fullName>
    </recommendedName>
    <alternativeName>
        <fullName evidence="3">30S ribosomal protein S2</fullName>
    </alternativeName>
</protein>
<comment type="similarity">
    <text evidence="1">Belongs to the universal ribosomal protein uS2 family.</text>
</comment>
<accession>Q4FUT9</accession>
<keyword id="KW-1185">Reference proteome</keyword>
<keyword id="KW-0687">Ribonucleoprotein</keyword>
<keyword id="KW-0689">Ribosomal protein</keyword>
<sequence>MATKNPTKIEMRDLLQAGAHFGHQTRFWNPKMGPYIFGARNKIHIINLEHTVKAFNEALTYVNGLAAKKNKVLFVGTKRAASGVIAEQAARAGMPYVDHRWLGGMLTNWKTLRQSINRLKELEKQAEDGTFAKLTKREALERTRDMEKLERSLGGIKDMGGLPDAIFVVDVDHEAIAIKEAKNLGIPVIGIVDTNSNPDNVDYIIPANDDAIRAVTLYVTSMADAIIAGKEYAQTQAGGKAEQEAPATEEAADAQTEEAATPAE</sequence>
<reference key="1">
    <citation type="journal article" date="2010" name="Appl. Environ. Microbiol.">
        <title>The genome sequence of Psychrobacter arcticus 273-4, a psychroactive Siberian permafrost bacterium, reveals mechanisms for adaptation to low-temperature growth.</title>
        <authorList>
            <person name="Ayala-del-Rio H.L."/>
            <person name="Chain P.S."/>
            <person name="Grzymski J.J."/>
            <person name="Ponder M.A."/>
            <person name="Ivanova N."/>
            <person name="Bergholz P.W."/>
            <person name="Di Bartolo G."/>
            <person name="Hauser L."/>
            <person name="Land M."/>
            <person name="Bakermans C."/>
            <person name="Rodrigues D."/>
            <person name="Klappenbach J."/>
            <person name="Zarka D."/>
            <person name="Larimer F."/>
            <person name="Richardson P."/>
            <person name="Murray A."/>
            <person name="Thomashow M."/>
            <person name="Tiedje J.M."/>
        </authorList>
    </citation>
    <scope>NUCLEOTIDE SEQUENCE [LARGE SCALE GENOMIC DNA]</scope>
    <source>
        <strain>DSM 17307 / VKM B-2377 / 273-4</strain>
    </source>
</reference>
<gene>
    <name evidence="1" type="primary">rpsB</name>
    <name type="ordered locus">Psyc_0350</name>
</gene>
<organism>
    <name type="scientific">Psychrobacter arcticus (strain DSM 17307 / VKM B-2377 / 273-4)</name>
    <dbReference type="NCBI Taxonomy" id="259536"/>
    <lineage>
        <taxon>Bacteria</taxon>
        <taxon>Pseudomonadati</taxon>
        <taxon>Pseudomonadota</taxon>
        <taxon>Gammaproteobacteria</taxon>
        <taxon>Moraxellales</taxon>
        <taxon>Moraxellaceae</taxon>
        <taxon>Psychrobacter</taxon>
    </lineage>
</organism>
<dbReference type="EMBL" id="CP000082">
    <property type="protein sequence ID" value="AAZ18219.1"/>
    <property type="molecule type" value="Genomic_DNA"/>
</dbReference>
<dbReference type="RefSeq" id="WP_011279657.1">
    <property type="nucleotide sequence ID" value="NC_007204.1"/>
</dbReference>
<dbReference type="SMR" id="Q4FUT9"/>
<dbReference type="STRING" id="259536.Psyc_0350"/>
<dbReference type="KEGG" id="par:Psyc_0350"/>
<dbReference type="eggNOG" id="COG0052">
    <property type="taxonomic scope" value="Bacteria"/>
</dbReference>
<dbReference type="HOGENOM" id="CLU_040318_1_2_6"/>
<dbReference type="OrthoDB" id="9808036at2"/>
<dbReference type="Proteomes" id="UP000000546">
    <property type="component" value="Chromosome"/>
</dbReference>
<dbReference type="GO" id="GO:0022627">
    <property type="term" value="C:cytosolic small ribosomal subunit"/>
    <property type="evidence" value="ECO:0007669"/>
    <property type="project" value="TreeGrafter"/>
</dbReference>
<dbReference type="GO" id="GO:0003735">
    <property type="term" value="F:structural constituent of ribosome"/>
    <property type="evidence" value="ECO:0007669"/>
    <property type="project" value="InterPro"/>
</dbReference>
<dbReference type="GO" id="GO:0006412">
    <property type="term" value="P:translation"/>
    <property type="evidence" value="ECO:0007669"/>
    <property type="project" value="UniProtKB-UniRule"/>
</dbReference>
<dbReference type="CDD" id="cd01425">
    <property type="entry name" value="RPS2"/>
    <property type="match status" value="1"/>
</dbReference>
<dbReference type="FunFam" id="1.10.287.610:FF:000001">
    <property type="entry name" value="30S ribosomal protein S2"/>
    <property type="match status" value="1"/>
</dbReference>
<dbReference type="Gene3D" id="3.40.50.10490">
    <property type="entry name" value="Glucose-6-phosphate isomerase like protein, domain 1"/>
    <property type="match status" value="1"/>
</dbReference>
<dbReference type="Gene3D" id="1.10.287.610">
    <property type="entry name" value="Helix hairpin bin"/>
    <property type="match status" value="1"/>
</dbReference>
<dbReference type="HAMAP" id="MF_00291_B">
    <property type="entry name" value="Ribosomal_uS2_B"/>
    <property type="match status" value="1"/>
</dbReference>
<dbReference type="InterPro" id="IPR001865">
    <property type="entry name" value="Ribosomal_uS2"/>
</dbReference>
<dbReference type="InterPro" id="IPR005706">
    <property type="entry name" value="Ribosomal_uS2_bac/mit/plastid"/>
</dbReference>
<dbReference type="InterPro" id="IPR018130">
    <property type="entry name" value="Ribosomal_uS2_CS"/>
</dbReference>
<dbReference type="InterPro" id="IPR023591">
    <property type="entry name" value="Ribosomal_uS2_flav_dom_sf"/>
</dbReference>
<dbReference type="NCBIfam" id="TIGR01011">
    <property type="entry name" value="rpsB_bact"/>
    <property type="match status" value="1"/>
</dbReference>
<dbReference type="PANTHER" id="PTHR12534">
    <property type="entry name" value="30S RIBOSOMAL PROTEIN S2 PROKARYOTIC AND ORGANELLAR"/>
    <property type="match status" value="1"/>
</dbReference>
<dbReference type="PANTHER" id="PTHR12534:SF0">
    <property type="entry name" value="SMALL RIBOSOMAL SUBUNIT PROTEIN US2M"/>
    <property type="match status" value="1"/>
</dbReference>
<dbReference type="Pfam" id="PF00318">
    <property type="entry name" value="Ribosomal_S2"/>
    <property type="match status" value="1"/>
</dbReference>
<dbReference type="PRINTS" id="PR00395">
    <property type="entry name" value="RIBOSOMALS2"/>
</dbReference>
<dbReference type="SUPFAM" id="SSF52313">
    <property type="entry name" value="Ribosomal protein S2"/>
    <property type="match status" value="1"/>
</dbReference>
<dbReference type="PROSITE" id="PS00962">
    <property type="entry name" value="RIBOSOMAL_S2_1"/>
    <property type="match status" value="1"/>
</dbReference>
<dbReference type="PROSITE" id="PS00963">
    <property type="entry name" value="RIBOSOMAL_S2_2"/>
    <property type="match status" value="1"/>
</dbReference>
<feature type="chain" id="PRO_0000352025" description="Small ribosomal subunit protein uS2">
    <location>
        <begin position="1"/>
        <end position="264"/>
    </location>
</feature>
<feature type="region of interest" description="Disordered" evidence="2">
    <location>
        <begin position="233"/>
        <end position="264"/>
    </location>
</feature>
<name>RS2_PSYA2</name>